<sequence>MCSSKMPCSPSASSLCAASPPNCCHPSCCQTTCCRTTSCSHSCSVSSCCRPQCCHSVCCQPTCCRPSCCQTTCCRTTCCHPSCCVSSCCRPQCCHSVCFQPTCCHPSCCISSSCCPSCCESSCCCPCCCLRPVCGRVSCHVTCYHPTCVISTCPHPLCCASPPLPLPFPSPPVPLPFFLSLALPSPPRPSPPLLSPVLIPSPSPSPSLPSLSPPLPSPPLPSPHFPSVNPKSMLQ</sequence>
<accession>G5E9R7</accession>
<feature type="chain" id="PRO_0000454664" description="Keratin-associated protein 4-16">
    <location>
        <begin position="1"/>
        <end position="235"/>
    </location>
</feature>
<feature type="repeat" description="1">
    <location>
        <begin position="23"/>
        <end position="27"/>
    </location>
</feature>
<feature type="repeat" description="2">
    <location>
        <begin position="28"/>
        <end position="32"/>
    </location>
</feature>
<feature type="repeat" description="3">
    <location>
        <begin position="33"/>
        <end position="37"/>
    </location>
</feature>
<feature type="repeat" description="4">
    <location>
        <begin position="48"/>
        <end position="52"/>
    </location>
</feature>
<feature type="repeat" description="5">
    <location>
        <begin position="53"/>
        <end position="57"/>
    </location>
</feature>
<feature type="repeat" description="6">
    <location>
        <begin position="58"/>
        <end position="62"/>
    </location>
</feature>
<feature type="repeat" description="7">
    <location>
        <begin position="63"/>
        <end position="67"/>
    </location>
</feature>
<feature type="repeat" description="8">
    <location>
        <begin position="68"/>
        <end position="72"/>
    </location>
</feature>
<feature type="repeat" description="9">
    <location>
        <begin position="78"/>
        <end position="82"/>
    </location>
</feature>
<feature type="repeat" description="10">
    <location>
        <begin position="83"/>
        <end position="87"/>
    </location>
</feature>
<feature type="repeat" description="11">
    <location>
        <begin position="88"/>
        <end position="92"/>
    </location>
</feature>
<feature type="repeat" description="12">
    <location>
        <begin position="93"/>
        <end position="97"/>
    </location>
</feature>
<feature type="repeat" description="13">
    <location>
        <begin position="103"/>
        <end position="107"/>
    </location>
</feature>
<feature type="repeat" description="14">
    <location>
        <begin position="108"/>
        <end position="112"/>
    </location>
</feature>
<feature type="repeat" description="15">
    <location>
        <begin position="118"/>
        <end position="122"/>
    </location>
</feature>
<feature type="repeat" description="16">
    <location>
        <begin position="128"/>
        <end position="132"/>
    </location>
</feature>
<feature type="region of interest" description="16 X 5 AA repeats of C-C-[GIKRQVHEML]-[SPTRV]-[STVQRCP]">
    <location>
        <begin position="1"/>
        <end position="132"/>
    </location>
</feature>
<feature type="region of interest" description="Disordered" evidence="1">
    <location>
        <begin position="203"/>
        <end position="235"/>
    </location>
</feature>
<feature type="compositionally biased region" description="Pro residues" evidence="1">
    <location>
        <begin position="203"/>
        <end position="224"/>
    </location>
</feature>
<organism>
    <name type="scientific">Homo sapiens</name>
    <name type="common">Human</name>
    <dbReference type="NCBI Taxonomy" id="9606"/>
    <lineage>
        <taxon>Eukaryota</taxon>
        <taxon>Metazoa</taxon>
        <taxon>Chordata</taxon>
        <taxon>Craniata</taxon>
        <taxon>Vertebrata</taxon>
        <taxon>Euteleostomi</taxon>
        <taxon>Mammalia</taxon>
        <taxon>Eutheria</taxon>
        <taxon>Euarchontoglires</taxon>
        <taxon>Primates</taxon>
        <taxon>Haplorrhini</taxon>
        <taxon>Catarrhini</taxon>
        <taxon>Hominidae</taxon>
        <taxon>Homo</taxon>
    </lineage>
</organism>
<proteinExistence type="evidence at protein level"/>
<dbReference type="EMBL" id="AC037482">
    <property type="status" value="NOT_ANNOTATED_CDS"/>
    <property type="molecule type" value="Genomic_DNA"/>
</dbReference>
<dbReference type="EMBL" id="AC100808">
    <property type="status" value="NOT_ANNOTATED_CDS"/>
    <property type="molecule type" value="Genomic_DNA"/>
</dbReference>
<dbReference type="EMBL" id="CH471152">
    <property type="protein sequence ID" value="EAW60706.1"/>
    <property type="molecule type" value="Genomic_DNA"/>
</dbReference>
<dbReference type="CCDS" id="CCDS92304.1"/>
<dbReference type="RefSeq" id="NP_001382996.1">
    <property type="nucleotide sequence ID" value="NM_001396067.1"/>
</dbReference>
<dbReference type="STRING" id="9606.ENSP00000411198"/>
<dbReference type="BioMuta" id="KRTAP4-16"/>
<dbReference type="MassIVE" id="G5E9R7"/>
<dbReference type="PaxDb" id="9606-ENSP00000411198"/>
<dbReference type="PeptideAtlas" id="G5E9R7"/>
<dbReference type="Ensembl" id="ENST00000440582.1">
    <property type="protein sequence ID" value="ENSP00000411198.1"/>
    <property type="gene ID" value="ENSG00000241241.1"/>
</dbReference>
<dbReference type="Ensembl" id="ENST00000576939.1">
    <property type="protein sequence ID" value="ENSP00000461664.1"/>
    <property type="gene ID" value="ENSG00000262520.1"/>
</dbReference>
<dbReference type="Ensembl" id="ENST00000709619.1">
    <property type="protein sequence ID" value="ENSP00000517804.1"/>
    <property type="gene ID" value="ENSG00000292055.1"/>
</dbReference>
<dbReference type="GeneID" id="85354"/>
<dbReference type="MANE-Select" id="ENST00000440582.1">
    <property type="protein sequence ID" value="ENSP00000411198.1"/>
    <property type="RefSeq nucleotide sequence ID" value="NM_001396067.1"/>
    <property type="RefSeq protein sequence ID" value="NP_001382996.1"/>
</dbReference>
<dbReference type="UCSC" id="uc060faq.1">
    <property type="organism name" value="human"/>
</dbReference>
<dbReference type="AGR" id="HGNC:18921"/>
<dbReference type="GeneCards" id="KRTAP4-16"/>
<dbReference type="HGNC" id="HGNC:18921">
    <property type="gene designation" value="KRTAP4-16"/>
</dbReference>
<dbReference type="HPA" id="ENSG00000241241">
    <property type="expression patterns" value="Not detected"/>
</dbReference>
<dbReference type="OpenTargets" id="ENSG00000241241"/>
<dbReference type="VEuPathDB" id="HostDB:ENSG00000241241"/>
<dbReference type="eggNOG" id="KOG4726">
    <property type="taxonomic scope" value="Eukaryota"/>
</dbReference>
<dbReference type="GeneTree" id="ENSGT00940000163975"/>
<dbReference type="HOGENOM" id="CLU_1179881_0_0_1"/>
<dbReference type="InParanoid" id="G5E9R7"/>
<dbReference type="OMA" id="HLCPSHL"/>
<dbReference type="PAN-GO" id="G5E9R7">
    <property type="GO annotations" value="0 GO annotations based on evolutionary models"/>
</dbReference>
<dbReference type="TreeFam" id="TF351356"/>
<dbReference type="Proteomes" id="UP000005640">
    <property type="component" value="Chromosome 17"/>
</dbReference>
<dbReference type="RNAct" id="G5E9R7">
    <property type="molecule type" value="protein"/>
</dbReference>
<dbReference type="Bgee" id="ENSG00000241241">
    <property type="expression patterns" value="Expressed in leg and 4 other cell types or tissues"/>
</dbReference>
<dbReference type="GO" id="GO:0005829">
    <property type="term" value="C:cytosol"/>
    <property type="evidence" value="ECO:0007669"/>
    <property type="project" value="UniProtKB-ARBA"/>
</dbReference>
<dbReference type="GO" id="GO:0045095">
    <property type="term" value="C:keratin filament"/>
    <property type="evidence" value="ECO:0007669"/>
    <property type="project" value="InterPro"/>
</dbReference>
<dbReference type="InterPro" id="IPR002494">
    <property type="entry name" value="KAP"/>
</dbReference>
<dbReference type="Pfam" id="PF13885">
    <property type="entry name" value="Keratin_B2_2"/>
    <property type="match status" value="1"/>
</dbReference>
<reference key="1">
    <citation type="journal article" date="2006" name="Nature">
        <title>DNA sequence of human chromosome 17 and analysis of rearrangement in the human lineage.</title>
        <authorList>
            <person name="Zody M.C."/>
            <person name="Garber M."/>
            <person name="Adams D.J."/>
            <person name="Sharpe T."/>
            <person name="Harrow J."/>
            <person name="Lupski J.R."/>
            <person name="Nicholson C."/>
            <person name="Searle S.M."/>
            <person name="Wilming L."/>
            <person name="Young S.K."/>
            <person name="Abouelleil A."/>
            <person name="Allen N.R."/>
            <person name="Bi W."/>
            <person name="Bloom T."/>
            <person name="Borowsky M.L."/>
            <person name="Bugalter B.E."/>
            <person name="Butler J."/>
            <person name="Chang J.L."/>
            <person name="Chen C.-K."/>
            <person name="Cook A."/>
            <person name="Corum B."/>
            <person name="Cuomo C.A."/>
            <person name="de Jong P.J."/>
            <person name="DeCaprio D."/>
            <person name="Dewar K."/>
            <person name="FitzGerald M."/>
            <person name="Gilbert J."/>
            <person name="Gibson R."/>
            <person name="Gnerre S."/>
            <person name="Goldstein S."/>
            <person name="Grafham D.V."/>
            <person name="Grocock R."/>
            <person name="Hafez N."/>
            <person name="Hagopian D.S."/>
            <person name="Hart E."/>
            <person name="Norman C.H."/>
            <person name="Humphray S."/>
            <person name="Jaffe D.B."/>
            <person name="Jones M."/>
            <person name="Kamal M."/>
            <person name="Khodiyar V.K."/>
            <person name="LaButti K."/>
            <person name="Laird G."/>
            <person name="Lehoczky J."/>
            <person name="Liu X."/>
            <person name="Lokyitsang T."/>
            <person name="Loveland J."/>
            <person name="Lui A."/>
            <person name="Macdonald P."/>
            <person name="Major J.E."/>
            <person name="Matthews L."/>
            <person name="Mauceli E."/>
            <person name="McCarroll S.A."/>
            <person name="Mihalev A.H."/>
            <person name="Mudge J."/>
            <person name="Nguyen C."/>
            <person name="Nicol R."/>
            <person name="O'Leary S.B."/>
            <person name="Osoegawa K."/>
            <person name="Schwartz D.C."/>
            <person name="Shaw-Smith C."/>
            <person name="Stankiewicz P."/>
            <person name="Steward C."/>
            <person name="Swarbreck D."/>
            <person name="Venkataraman V."/>
            <person name="Whittaker C.A."/>
            <person name="Yang X."/>
            <person name="Zimmer A.R."/>
            <person name="Bradley A."/>
            <person name="Hubbard T."/>
            <person name="Birren B.W."/>
            <person name="Rogers J."/>
            <person name="Lander E.S."/>
            <person name="Nusbaum C."/>
        </authorList>
    </citation>
    <scope>NUCLEOTIDE SEQUENCE [LARGE SCALE GENOMIC DNA]</scope>
</reference>
<reference key="2">
    <citation type="submission" date="2005-07" db="EMBL/GenBank/DDBJ databases">
        <authorList>
            <person name="Mural R.J."/>
            <person name="Istrail S."/>
            <person name="Sutton G.G."/>
            <person name="Florea L."/>
            <person name="Halpern A.L."/>
            <person name="Mobarry C.M."/>
            <person name="Lippert R."/>
            <person name="Walenz B."/>
            <person name="Shatkay H."/>
            <person name="Dew I."/>
            <person name="Miller J.R."/>
            <person name="Flanigan M.J."/>
            <person name="Edwards N.J."/>
            <person name="Bolanos R."/>
            <person name="Fasulo D."/>
            <person name="Halldorsson B.V."/>
            <person name="Hannenhalli S."/>
            <person name="Turner R."/>
            <person name="Yooseph S."/>
            <person name="Lu F."/>
            <person name="Nusskern D.R."/>
            <person name="Shue B.C."/>
            <person name="Zheng X.H."/>
            <person name="Zhong F."/>
            <person name="Delcher A.L."/>
            <person name="Huson D.H."/>
            <person name="Kravitz S.A."/>
            <person name="Mouchard L."/>
            <person name="Reinert K."/>
            <person name="Remington K.A."/>
            <person name="Clark A.G."/>
            <person name="Waterman M.S."/>
            <person name="Eichler E.E."/>
            <person name="Adams M.D."/>
            <person name="Hunkapiller M.W."/>
            <person name="Myers E.W."/>
            <person name="Venter J.C."/>
        </authorList>
    </citation>
    <scope>NUCLEOTIDE SEQUENCE [LARGE SCALE GENOMIC DNA]</scope>
</reference>
<reference key="3">
    <citation type="journal article" date="2005" name="J. Invest. Dermatol.">
        <title>Size polymorphisms in the human ultrahigh sulfur hair keratin-associated protein 4, KAP4, gene family.</title>
        <authorList>
            <person name="Kariya N."/>
            <person name="Shimomura Y."/>
            <person name="Ito M."/>
        </authorList>
    </citation>
    <scope>FUNCTION</scope>
    <scope>SUBUNIT</scope>
    <scope>POLYMORPHISM</scope>
    <scope>CAUTION</scope>
</reference>
<protein>
    <recommendedName>
        <fullName evidence="5">Keratin-associated protein 4-16</fullName>
    </recommendedName>
</protein>
<name>KR416_HUMAN</name>
<gene>
    <name evidence="5" type="primary">KRTAP4-16</name>
    <name evidence="5" type="synonym">KRTAP4-16P</name>
    <name evidence="5" type="synonym">KRTAP4P1</name>
</gene>
<comment type="function">
    <text evidence="4">In the hair cortex, hair keratin intermediate filaments are embedded in an interfilamentous matrix, consisting of hair keratin-associated proteins (KRTAP), which are essential for the formation of a rigid and resistant hair shaft through their extensive disulfide bond cross-linking with abundant cysteine residues of hair keratins. The matrix proteins include the high-sulfur and high-glycine-tyrosine keratins.</text>
</comment>
<comment type="subunit">
    <text evidence="4">Interacts with hair keratins.</text>
</comment>
<comment type="polymorphism">
    <text evidence="2">Numerous size polymorphism are present in KRTAP4 gene family, which are mainly due to variations in the sequence encoding cysteine-rich repeat segments.</text>
</comment>
<comment type="similarity">
    <text evidence="3">Belongs to the KRTAP type 4 family.</text>
</comment>
<evidence type="ECO:0000256" key="1">
    <source>
        <dbReference type="SAM" id="MobiDB-lite"/>
    </source>
</evidence>
<evidence type="ECO:0000269" key="2">
    <source>
    </source>
</evidence>
<evidence type="ECO:0000305" key="3"/>
<evidence type="ECO:0000305" key="4">
    <source>
    </source>
</evidence>
<evidence type="ECO:0000312" key="5">
    <source>
        <dbReference type="HGNC" id="HGNC:18921"/>
    </source>
</evidence>
<keyword id="KW-0416">Keratin</keyword>
<keyword id="KW-1185">Reference proteome</keyword>
<keyword id="KW-0677">Repeat</keyword>